<sequence>MSNTNFSTSRSSKSIPELPNLEALRSLWPPPSLNESGDTRSVWTTHTGEPVASSVLSTSGSNNFSSPLKRPAPESHDAPIGRRLMVDDPRLIKHGKYDFSRHCTDYGHSYEWPYFRSLRRESMLYHTSGSYPESQPPYSSYSTDAPHYYHAGSESSAYYDSRSRLHGIQPPPKRRTLSPPPRRLADPVVVGSSRYVEEEVYRRPPYTLASEVPSSASAYQAGYSSYPVRSSPQLSHEDTRHGIASSGSTRYPFVPANTRASHSPSLLEPYAHSLPSSVAPVGAYPEKSSYLLSNSSNDSASRKEKPKARASTPPPLNFSRASEHRNEKGERISMINPRVVLDENGISHRSRYFIMLCDNETAIAHAKKTSIWAVKKDSSKRISDAYKKASVYFIFVAQQTYNALGYAQVVSDLNSTELPFWSDSSHAGGVRIKWIKTCNLFSAEISEIVSHMDHGSEARDGMEMMYDEGSRLCTLINYAIMKRIGRDR</sequence>
<feature type="chain" id="PRO_0000372616" description="RNA binding exosome specificity factor Mmi1">
    <location>
        <begin position="1"/>
        <end position="488"/>
    </location>
</feature>
<feature type="domain" description="YTH" evidence="2">
    <location>
        <begin position="350"/>
        <end position="476"/>
    </location>
</feature>
<feature type="region of interest" description="Disordered" evidence="3">
    <location>
        <begin position="1"/>
        <end position="20"/>
    </location>
</feature>
<feature type="region of interest" description="Disordered" evidence="3">
    <location>
        <begin position="25"/>
        <end position="80"/>
    </location>
</feature>
<feature type="region of interest" description="Interaction with erh1" evidence="8">
    <location>
        <begin position="95"/>
        <end position="122"/>
    </location>
</feature>
<feature type="region of interest" description="Disordered" evidence="3">
    <location>
        <begin position="163"/>
        <end position="185"/>
    </location>
</feature>
<feature type="region of interest" description="Disordered" evidence="3">
    <location>
        <begin position="225"/>
        <end position="261"/>
    </location>
</feature>
<feature type="region of interest" description="Disordered" evidence="3">
    <location>
        <begin position="289"/>
        <end position="328"/>
    </location>
</feature>
<feature type="compositionally biased region" description="Polar residues" evidence="3">
    <location>
        <begin position="1"/>
        <end position="14"/>
    </location>
</feature>
<feature type="compositionally biased region" description="Polar residues" evidence="3">
    <location>
        <begin position="33"/>
        <end position="47"/>
    </location>
</feature>
<feature type="compositionally biased region" description="Polar residues" evidence="3">
    <location>
        <begin position="54"/>
        <end position="66"/>
    </location>
</feature>
<feature type="compositionally biased region" description="Basic and acidic residues" evidence="3">
    <location>
        <begin position="71"/>
        <end position="80"/>
    </location>
</feature>
<feature type="compositionally biased region" description="Low complexity" evidence="3">
    <location>
        <begin position="289"/>
        <end position="299"/>
    </location>
</feature>
<feature type="modified residue" description="Phosphothreonine" evidence="6">
    <location>
        <position position="176"/>
    </location>
</feature>
<feature type="modified residue" description="Phosphoserine" evidence="6">
    <location>
        <position position="178"/>
    </location>
</feature>
<feature type="modified residue" description="Phosphoserine" evidence="6">
    <location>
        <position position="230"/>
    </location>
</feature>
<feature type="modified residue" description="Phosphoserine" evidence="6">
    <location>
        <position position="231"/>
    </location>
</feature>
<feature type="modified residue" description="Phosphoserine" evidence="6">
    <location>
        <position position="261"/>
    </location>
</feature>
<feature type="modified residue" description="Phosphoserine" evidence="6">
    <location>
        <position position="263"/>
    </location>
</feature>
<feature type="modified residue" description="Phosphoserine" evidence="6">
    <location>
        <position position="265"/>
    </location>
</feature>
<feature type="modified residue" description="Phosphoserine" evidence="6">
    <location>
        <position position="311"/>
    </location>
</feature>
<feature type="modified residue" description="Phosphothreonine" evidence="6">
    <location>
        <position position="312"/>
    </location>
</feature>
<feature type="mutagenesis site" description="Decreases interaction with erh1." evidence="8">
    <original>Y</original>
    <variation>A</variation>
    <location>
        <position position="97"/>
    </location>
</feature>
<feature type="mutagenesis site" description="Decreases interaction with erh1." evidence="8">
    <original>F</original>
    <variation>A</variation>
    <location>
        <position position="99"/>
    </location>
</feature>
<feature type="mutagenesis site" description="Abolishes interaction with erh1. Abnormal poly(A)-site selection of ssm4. Increases the level and cytoplasmic localization of mating and meiosis specific transcripts. Decreases H3K9me2 levels at meiotic heterochromatin islands, decreases mating efficiency, cold sensitive, normal growth at high temperature." evidence="8">
    <original>W</original>
    <variation>A</variation>
    <location>
        <position position="112"/>
    </location>
</feature>
<feature type="mutagenesis site" description="Decreases interaction with erh1." evidence="8">
    <original>R</original>
    <variation>A</variation>
    <location>
        <position position="119"/>
    </location>
</feature>
<feature type="turn" evidence="12">
    <location>
        <begin position="99"/>
        <end position="102"/>
    </location>
</feature>
<feature type="strand" evidence="12">
    <location>
        <begin position="104"/>
        <end position="108"/>
    </location>
</feature>
<feature type="helix" evidence="12">
    <location>
        <begin position="109"/>
        <end position="111"/>
    </location>
</feature>
<feature type="helix" evidence="12">
    <location>
        <begin position="113"/>
        <end position="117"/>
    </location>
</feature>
<feature type="helix" evidence="13">
    <location>
        <begin position="321"/>
        <end position="323"/>
    </location>
</feature>
<feature type="strand" evidence="13">
    <location>
        <begin position="339"/>
        <end position="341"/>
    </location>
</feature>
<feature type="strand" evidence="13">
    <location>
        <begin position="348"/>
        <end position="357"/>
    </location>
</feature>
<feature type="helix" evidence="13">
    <location>
        <begin position="360"/>
        <end position="369"/>
    </location>
</feature>
<feature type="strand" evidence="13">
    <location>
        <begin position="371"/>
        <end position="375"/>
    </location>
</feature>
<feature type="helix" evidence="13">
    <location>
        <begin position="376"/>
        <end position="386"/>
    </location>
</feature>
<feature type="strand" evidence="13">
    <location>
        <begin position="389"/>
        <end position="397"/>
    </location>
</feature>
<feature type="turn" evidence="13">
    <location>
        <begin position="398"/>
        <end position="400"/>
    </location>
</feature>
<feature type="strand" evidence="13">
    <location>
        <begin position="403"/>
        <end position="409"/>
    </location>
</feature>
<feature type="strand" evidence="13">
    <location>
        <begin position="414"/>
        <end position="417"/>
    </location>
</feature>
<feature type="strand" evidence="13">
    <location>
        <begin position="426"/>
        <end position="440"/>
    </location>
</feature>
<feature type="helix" evidence="13">
    <location>
        <begin position="443"/>
        <end position="450"/>
    </location>
</feature>
<feature type="helix" evidence="13">
    <location>
        <begin position="466"/>
        <end position="481"/>
    </location>
</feature>
<protein>
    <recommendedName>
        <fullName evidence="10">RNA binding exosome specificity factor Mmi1</fullName>
    </recommendedName>
    <alternativeName>
        <fullName>Meiotic mRNA interception protein 1</fullName>
    </alternativeName>
    <alternativeName>
        <fullName>YTH domain-containing protein mmi1</fullName>
    </alternativeName>
</protein>
<gene>
    <name type="primary">mmi1</name>
    <name type="ORF">SPCC736.12c</name>
</gene>
<accession>O74958</accession>
<comment type="function">
    <text evidence="1 5 7 8 9">RNA-binding protein that recognizes and binds N6-methyladenosine (m6A)-containing RNAs, a modification present at internal sites of mRNAs and some non-coding RNAs (By similarity). Functions alone and as part of the erh1-mmi1 complex, to recruit the CCR4-NOT complex and the NURS complex to target RNAs (PubMed:26942678, PubMed:30651569, PubMed:31974447). Suppresses the meiotic program during vegetative growth and promotes the meiotic program during mating (PubMed:31974447). Binds to DSR (determinant of selective removal) regions in meiotic mRNA, and recruits the NURS complex to targets (PubMed:16823445, PubMed:26942678). Recruitment of NURS complex to target mRNAs promotes mRNA decay by engagement of the nuclear exosome, and formation of heterochromatin islands at meiotic genes silenced by the exosome (PubMed:16823445, PubMed:26942678). Recruitment of the CCR4-NOT complex to target RNAs promotes heterochromatin formation at RNAi-dependent heterochromatin domains (HOODs), including a subset of meiotic genes, lncRNAs and retrotransposons (PubMed:26942678). Recruitment of the CCR4-NOT complex to rDNA promotes rDNA heterochromatin assembly (PubMed:26942678). Promotes non-canonical transcription termination at meiotic genes and prevents lncRNA transcription from invading and repressing adjacent genes (PubMed:16823445, PubMed:30651569).</text>
</comment>
<comment type="subunit">
    <text evidence="5 7 8 9">Component of the erh1-mmi1 complex composed of mmi1 and erh1 (PubMed:26942678, PubMed:30651569, PubMed:31974447). Interacts (via N-terminus) with erh1 in a 2:2 stoichiometry (PubMed:26942678, PubMed:30651569, PubMed:31974447). Interacts with rrp6 (PubMed:16823445).</text>
</comment>
<comment type="interaction">
    <interactant intactId="EBI-7997069">
        <id>O74958</id>
    </interactant>
    <interactant intactId="EBI-7997255">
        <id>O14327</id>
        <label>pab2</label>
    </interactant>
    <organismsDiffer>false</organismsDiffer>
    <experiments>4</experiments>
</comment>
<comment type="interaction">
    <interactant intactId="EBI-7997069">
        <id>O74958</id>
    </interactant>
    <interactant intactId="EBI-7997221">
        <id>Q10295</id>
        <label>pla1</label>
    </interactant>
    <organismsDiffer>false</organismsDiffer>
    <experiments>3</experiments>
</comment>
<comment type="interaction">
    <interactant intactId="EBI-7997069">
        <id>O74958</id>
    </interactant>
    <interactant intactId="EBI-1117407">
        <id>Q9UTR8</id>
        <label>red1</label>
    </interactant>
    <organismsDiffer>false</organismsDiffer>
    <experiments>5</experiments>
</comment>
<comment type="subcellular location">
    <subcellularLocation>
        <location evidence="4 5">Nucleus</location>
    </subcellularLocation>
</comment>
<comment type="disruption phenotype">
    <text evidence="7 8">Read-through transcription of regulatory lncRNAs (long non-coding RNAs) (PubMed:30651569). Decreases premature pre-mRNA 3'-end formation of ssm4 (PubMed:30651569). Increases levels and cytoplasmic localization of mating and meiosis specific transcripts during vegetative growth (PubMed:30651569). Decreases heterochromatin formation at meiotic heterochromatin islands (PubMed:26942678).</text>
</comment>
<dbReference type="EMBL" id="CU329672">
    <property type="protein sequence ID" value="CAA19276.3"/>
    <property type="molecule type" value="Genomic_DNA"/>
</dbReference>
<dbReference type="PIR" id="T41569">
    <property type="entry name" value="T41569"/>
</dbReference>
<dbReference type="RefSeq" id="NP_587783.2">
    <property type="nucleotide sequence ID" value="NM_001022776.3"/>
</dbReference>
<dbReference type="PDB" id="5DNO">
    <property type="method" value="X-ray"/>
    <property type="resolution" value="1.80 A"/>
    <property type="chains" value="A=322-488"/>
</dbReference>
<dbReference type="PDB" id="5DNP">
    <property type="method" value="X-ray"/>
    <property type="resolution" value="2.30 A"/>
    <property type="chains" value="A/B=322-488"/>
</dbReference>
<dbReference type="PDB" id="5EIM">
    <property type="method" value="X-ray"/>
    <property type="resolution" value="1.54 A"/>
    <property type="chains" value="A/B=326-488"/>
</dbReference>
<dbReference type="PDB" id="5EIP">
    <property type="method" value="X-ray"/>
    <property type="resolution" value="1.49 A"/>
    <property type="chains" value="A/B=349-477"/>
</dbReference>
<dbReference type="PDB" id="5H8A">
    <property type="method" value="X-ray"/>
    <property type="resolution" value="1.75 A"/>
    <property type="chains" value="A/B/C/D=311-488"/>
</dbReference>
<dbReference type="PDB" id="5HFZ">
    <property type="method" value="X-ray"/>
    <property type="resolution" value="1.96 A"/>
    <property type="chains" value="A/B/C/D=319-488"/>
</dbReference>
<dbReference type="PDB" id="5O8M">
    <property type="method" value="X-ray"/>
    <property type="resolution" value="1.45 A"/>
    <property type="chains" value="A/B/C/D=347-488"/>
</dbReference>
<dbReference type="PDB" id="6AKJ">
    <property type="method" value="X-ray"/>
    <property type="resolution" value="2.70 A"/>
    <property type="chains" value="A/B=96-122"/>
</dbReference>
<dbReference type="PDB" id="6FPP">
    <property type="method" value="X-ray"/>
    <property type="resolution" value="1.93 A"/>
    <property type="chains" value="A/B=327-488"/>
</dbReference>
<dbReference type="PDB" id="6FPQ">
    <property type="method" value="X-ray"/>
    <property type="resolution" value="1.42 A"/>
    <property type="chains" value="A=299-488"/>
</dbReference>
<dbReference type="PDB" id="6FPX">
    <property type="method" value="X-ray"/>
    <property type="resolution" value="1.97 A"/>
    <property type="chains" value="A/C/E=299-488"/>
</dbReference>
<dbReference type="PDBsum" id="5DNO"/>
<dbReference type="PDBsum" id="5DNP"/>
<dbReference type="PDBsum" id="5EIM"/>
<dbReference type="PDBsum" id="5EIP"/>
<dbReference type="PDBsum" id="5H8A"/>
<dbReference type="PDBsum" id="5HFZ"/>
<dbReference type="PDBsum" id="5O8M"/>
<dbReference type="PDBsum" id="6AKJ"/>
<dbReference type="PDBsum" id="6FPP"/>
<dbReference type="PDBsum" id="6FPQ"/>
<dbReference type="PDBsum" id="6FPX"/>
<dbReference type="SMR" id="O74958"/>
<dbReference type="BioGRID" id="276102">
    <property type="interactions" value="69"/>
</dbReference>
<dbReference type="FunCoup" id="O74958">
    <property type="interactions" value="438"/>
</dbReference>
<dbReference type="IntAct" id="O74958">
    <property type="interactions" value="7"/>
</dbReference>
<dbReference type="MINT" id="O74958"/>
<dbReference type="STRING" id="284812.O74958"/>
<dbReference type="iPTMnet" id="O74958"/>
<dbReference type="PaxDb" id="4896-SPCC736.12c.1"/>
<dbReference type="EnsemblFungi" id="SPCC736.12c.1">
    <property type="protein sequence ID" value="SPCC736.12c.1:pep"/>
    <property type="gene ID" value="SPCC736.12c"/>
</dbReference>
<dbReference type="GeneID" id="2539540"/>
<dbReference type="KEGG" id="spo:2539540"/>
<dbReference type="PomBase" id="SPCC736.12c">
    <property type="gene designation" value="mmi1"/>
</dbReference>
<dbReference type="VEuPathDB" id="FungiDB:SPCC736.12c"/>
<dbReference type="eggNOG" id="KOG1901">
    <property type="taxonomic scope" value="Eukaryota"/>
</dbReference>
<dbReference type="HOGENOM" id="CLU_570057_0_0_1"/>
<dbReference type="InParanoid" id="O74958"/>
<dbReference type="OMA" id="SRYFIML"/>
<dbReference type="EvolutionaryTrace" id="O74958"/>
<dbReference type="PRO" id="PR:O74958"/>
<dbReference type="Proteomes" id="UP000002485">
    <property type="component" value="Chromosome III"/>
</dbReference>
<dbReference type="GO" id="GO:0000785">
    <property type="term" value="C:chromatin"/>
    <property type="evidence" value="ECO:0000314"/>
    <property type="project" value="PomBase"/>
</dbReference>
<dbReference type="GO" id="GO:0005737">
    <property type="term" value="C:cytoplasm"/>
    <property type="evidence" value="ECO:0000318"/>
    <property type="project" value="GO_Central"/>
</dbReference>
<dbReference type="GO" id="GO:1990342">
    <property type="term" value="C:heterochromatin island"/>
    <property type="evidence" value="ECO:0000314"/>
    <property type="project" value="PomBase"/>
</dbReference>
<dbReference type="GO" id="GO:0033620">
    <property type="term" value="C:Mei2 nuclear dot complex"/>
    <property type="evidence" value="ECO:0000314"/>
    <property type="project" value="PomBase"/>
</dbReference>
<dbReference type="GO" id="GO:1990251">
    <property type="term" value="C:nuclear exosome focus"/>
    <property type="evidence" value="ECO:0000314"/>
    <property type="project" value="PomBase"/>
</dbReference>
<dbReference type="GO" id="GO:0005634">
    <property type="term" value="C:nucleus"/>
    <property type="evidence" value="ECO:0000314"/>
    <property type="project" value="PomBase"/>
</dbReference>
<dbReference type="GO" id="GO:1905762">
    <property type="term" value="F:CCR4-NOT complex binding"/>
    <property type="evidence" value="ECO:0000314"/>
    <property type="project" value="PomBase"/>
</dbReference>
<dbReference type="GO" id="GO:0106222">
    <property type="term" value="F:lncRNA binding"/>
    <property type="evidence" value="ECO:0000353"/>
    <property type="project" value="PomBase"/>
</dbReference>
<dbReference type="GO" id="GO:0003730">
    <property type="term" value="F:mRNA 3'-UTR binding"/>
    <property type="evidence" value="ECO:0000353"/>
    <property type="project" value="DisProt"/>
</dbReference>
<dbReference type="GO" id="GO:0003729">
    <property type="term" value="F:mRNA binding"/>
    <property type="evidence" value="ECO:0000314"/>
    <property type="project" value="PomBase"/>
</dbReference>
<dbReference type="GO" id="GO:1990247">
    <property type="term" value="F:N6-methyladenosine-containing RNA reader activity"/>
    <property type="evidence" value="ECO:0000318"/>
    <property type="project" value="GO_Central"/>
</dbReference>
<dbReference type="GO" id="GO:0036002">
    <property type="term" value="F:pre-mRNA binding"/>
    <property type="evidence" value="ECO:0000353"/>
    <property type="project" value="PomBase"/>
</dbReference>
<dbReference type="GO" id="GO:0097157">
    <property type="term" value="F:pre-mRNA intronic binding"/>
    <property type="evidence" value="ECO:0000353"/>
    <property type="project" value="PomBase"/>
</dbReference>
<dbReference type="GO" id="GO:0140517">
    <property type="term" value="F:protein-RNA adaptor activity"/>
    <property type="evidence" value="ECO:0000315"/>
    <property type="project" value="UniProtKB"/>
</dbReference>
<dbReference type="GO" id="GO:0003723">
    <property type="term" value="F:RNA binding"/>
    <property type="evidence" value="ECO:0000314"/>
    <property type="project" value="PomBase"/>
</dbReference>
<dbReference type="GO" id="GO:0110064">
    <property type="term" value="P:lncRNA catabolic process"/>
    <property type="evidence" value="ECO:0000315"/>
    <property type="project" value="PomBase"/>
</dbReference>
<dbReference type="GO" id="GO:0061157">
    <property type="term" value="P:mRNA destabilization"/>
    <property type="evidence" value="ECO:0000318"/>
    <property type="project" value="GO_Central"/>
</dbReference>
<dbReference type="GO" id="GO:0180036">
    <property type="term" value="P:nuclear lncRNA surveillance"/>
    <property type="evidence" value="ECO:0000315"/>
    <property type="project" value="PomBase"/>
</dbReference>
<dbReference type="GO" id="GO:0033621">
    <property type="term" value="P:nuclear mRNA surveillance of meiosis-specific transcripts"/>
    <property type="evidence" value="ECO:0000315"/>
    <property type="project" value="PomBase"/>
</dbReference>
<dbReference type="GO" id="GO:0071031">
    <property type="term" value="P:nuclear mRNA surveillance of mRNA 3'-end processing"/>
    <property type="evidence" value="ECO:0000315"/>
    <property type="project" value="PomBase"/>
</dbReference>
<dbReference type="GO" id="GO:0071030">
    <property type="term" value="P:nuclear mRNA surveillance of spliceosomal pre-mRNA splicing"/>
    <property type="evidence" value="ECO:0000315"/>
    <property type="project" value="PomBase"/>
</dbReference>
<dbReference type="GO" id="GO:0071039">
    <property type="term" value="P:nuclear polyadenylation-dependent CUT catabolic process"/>
    <property type="evidence" value="ECO:0000315"/>
    <property type="project" value="PomBase"/>
</dbReference>
<dbReference type="GO" id="GO:0071027">
    <property type="term" value="P:nuclear RNA surveillance"/>
    <property type="evidence" value="ECO:0000315"/>
    <property type="project" value="PomBase"/>
</dbReference>
<dbReference type="GO" id="GO:1902801">
    <property type="term" value="P:regulation of siRNA-independent facultative heterochromatin formation"/>
    <property type="evidence" value="ECO:0000315"/>
    <property type="project" value="PomBase"/>
</dbReference>
<dbReference type="GO" id="GO:2000804">
    <property type="term" value="P:regulation of termination of RNA polymerase II transcription, poly(A)-coupled"/>
    <property type="evidence" value="ECO:0000315"/>
    <property type="project" value="UniProtKB"/>
</dbReference>
<dbReference type="GO" id="GO:0043628">
    <property type="term" value="P:regulatory ncRNA 3'-end processing"/>
    <property type="evidence" value="ECO:0000269"/>
    <property type="project" value="PomBase"/>
</dbReference>
<dbReference type="GO" id="GO:0031047">
    <property type="term" value="P:regulatory ncRNA-mediated gene silencing"/>
    <property type="evidence" value="ECO:0000269"/>
    <property type="project" value="PomBase"/>
</dbReference>
<dbReference type="GO" id="GO:1902794">
    <property type="term" value="P:siRNA-independent facultative heterochromatin formation"/>
    <property type="evidence" value="ECO:0000315"/>
    <property type="project" value="PomBase"/>
</dbReference>
<dbReference type="CDD" id="cd21134">
    <property type="entry name" value="YTH"/>
    <property type="match status" value="1"/>
</dbReference>
<dbReference type="DisProt" id="DP01975"/>
<dbReference type="Gene3D" id="3.10.590.10">
    <property type="entry name" value="ph1033 like domains"/>
    <property type="match status" value="1"/>
</dbReference>
<dbReference type="InterPro" id="IPR007275">
    <property type="entry name" value="YTH_domain"/>
</dbReference>
<dbReference type="InterPro" id="IPR045168">
    <property type="entry name" value="YTH_prot"/>
</dbReference>
<dbReference type="PANTHER" id="PTHR12357:SF89">
    <property type="entry name" value="YTH DOMAIN-CONTAINING FAMILY PROTEIN"/>
    <property type="match status" value="1"/>
</dbReference>
<dbReference type="PANTHER" id="PTHR12357">
    <property type="entry name" value="YTH YT521-B HOMOLOGY DOMAIN-CONTAINING"/>
    <property type="match status" value="1"/>
</dbReference>
<dbReference type="Pfam" id="PF04146">
    <property type="entry name" value="YTH"/>
    <property type="match status" value="1"/>
</dbReference>
<dbReference type="PROSITE" id="PS50882">
    <property type="entry name" value="YTH"/>
    <property type="match status" value="1"/>
</dbReference>
<keyword id="KW-0002">3D-structure</keyword>
<keyword id="KW-0539">Nucleus</keyword>
<keyword id="KW-0597">Phosphoprotein</keyword>
<keyword id="KW-1185">Reference proteome</keyword>
<keyword id="KW-0694">RNA-binding</keyword>
<proteinExistence type="evidence at protein level"/>
<reference key="1">
    <citation type="journal article" date="2002" name="Nature">
        <title>The genome sequence of Schizosaccharomyces pombe.</title>
        <authorList>
            <person name="Wood V."/>
            <person name="Gwilliam R."/>
            <person name="Rajandream M.A."/>
            <person name="Lyne M.H."/>
            <person name="Lyne R."/>
            <person name="Stewart A."/>
            <person name="Sgouros J.G."/>
            <person name="Peat N."/>
            <person name="Hayles J."/>
            <person name="Baker S.G."/>
            <person name="Basham D."/>
            <person name="Bowman S."/>
            <person name="Brooks K."/>
            <person name="Brown D."/>
            <person name="Brown S."/>
            <person name="Chillingworth T."/>
            <person name="Churcher C.M."/>
            <person name="Collins M."/>
            <person name="Connor R."/>
            <person name="Cronin A."/>
            <person name="Davis P."/>
            <person name="Feltwell T."/>
            <person name="Fraser A."/>
            <person name="Gentles S."/>
            <person name="Goble A."/>
            <person name="Hamlin N."/>
            <person name="Harris D.E."/>
            <person name="Hidalgo J."/>
            <person name="Hodgson G."/>
            <person name="Holroyd S."/>
            <person name="Hornsby T."/>
            <person name="Howarth S."/>
            <person name="Huckle E.J."/>
            <person name="Hunt S."/>
            <person name="Jagels K."/>
            <person name="James K.D."/>
            <person name="Jones L."/>
            <person name="Jones M."/>
            <person name="Leather S."/>
            <person name="McDonald S."/>
            <person name="McLean J."/>
            <person name="Mooney P."/>
            <person name="Moule S."/>
            <person name="Mungall K.L."/>
            <person name="Murphy L.D."/>
            <person name="Niblett D."/>
            <person name="Odell C."/>
            <person name="Oliver K."/>
            <person name="O'Neil S."/>
            <person name="Pearson D."/>
            <person name="Quail M.A."/>
            <person name="Rabbinowitsch E."/>
            <person name="Rutherford K.M."/>
            <person name="Rutter S."/>
            <person name="Saunders D."/>
            <person name="Seeger K."/>
            <person name="Sharp S."/>
            <person name="Skelton J."/>
            <person name="Simmonds M.N."/>
            <person name="Squares R."/>
            <person name="Squares S."/>
            <person name="Stevens K."/>
            <person name="Taylor K."/>
            <person name="Taylor R.G."/>
            <person name="Tivey A."/>
            <person name="Walsh S.V."/>
            <person name="Warren T."/>
            <person name="Whitehead S."/>
            <person name="Woodward J.R."/>
            <person name="Volckaert G."/>
            <person name="Aert R."/>
            <person name="Robben J."/>
            <person name="Grymonprez B."/>
            <person name="Weltjens I."/>
            <person name="Vanstreels E."/>
            <person name="Rieger M."/>
            <person name="Schaefer M."/>
            <person name="Mueller-Auer S."/>
            <person name="Gabel C."/>
            <person name="Fuchs M."/>
            <person name="Duesterhoeft A."/>
            <person name="Fritzc C."/>
            <person name="Holzer E."/>
            <person name="Moestl D."/>
            <person name="Hilbert H."/>
            <person name="Borzym K."/>
            <person name="Langer I."/>
            <person name="Beck A."/>
            <person name="Lehrach H."/>
            <person name="Reinhardt R."/>
            <person name="Pohl T.M."/>
            <person name="Eger P."/>
            <person name="Zimmermann W."/>
            <person name="Wedler H."/>
            <person name="Wambutt R."/>
            <person name="Purnelle B."/>
            <person name="Goffeau A."/>
            <person name="Cadieu E."/>
            <person name="Dreano S."/>
            <person name="Gloux S."/>
            <person name="Lelaure V."/>
            <person name="Mottier S."/>
            <person name="Galibert F."/>
            <person name="Aves S.J."/>
            <person name="Xiang Z."/>
            <person name="Hunt C."/>
            <person name="Moore K."/>
            <person name="Hurst S.M."/>
            <person name="Lucas M."/>
            <person name="Rochet M."/>
            <person name="Gaillardin C."/>
            <person name="Tallada V.A."/>
            <person name="Garzon A."/>
            <person name="Thode G."/>
            <person name="Daga R.R."/>
            <person name="Cruzado L."/>
            <person name="Jimenez J."/>
            <person name="Sanchez M."/>
            <person name="del Rey F."/>
            <person name="Benito J."/>
            <person name="Dominguez A."/>
            <person name="Revuelta J.L."/>
            <person name="Moreno S."/>
            <person name="Armstrong J."/>
            <person name="Forsburg S.L."/>
            <person name="Cerutti L."/>
            <person name="Lowe T."/>
            <person name="McCombie W.R."/>
            <person name="Paulsen I."/>
            <person name="Potashkin J."/>
            <person name="Shpakovski G.V."/>
            <person name="Ussery D."/>
            <person name="Barrell B.G."/>
            <person name="Nurse P."/>
        </authorList>
    </citation>
    <scope>NUCLEOTIDE SEQUENCE [LARGE SCALE GENOMIC DNA]</scope>
    <source>
        <strain>972 / ATCC 24843</strain>
    </source>
</reference>
<reference key="2">
    <citation type="journal article" date="2006" name="Nature">
        <title>Selective elimination of messenger RNA prevents an incidence of untimely meiosis.</title>
        <authorList>
            <person name="Harigaya Y."/>
            <person name="Tanaka H."/>
            <person name="Yamanaka S."/>
            <person name="Tanaka K."/>
            <person name="Watanabe Y."/>
            <person name="Tsutsumi C."/>
            <person name="Chikashige Y."/>
            <person name="Hiraoka Y."/>
            <person name="Yamashita A."/>
            <person name="Yamamoto M."/>
        </authorList>
    </citation>
    <scope>FUNCTION</scope>
    <scope>INTERACTION WITH RRP6</scope>
    <scope>SUBCELLULAR LOCATION</scope>
</reference>
<reference key="3">
    <citation type="journal article" date="2006" name="Nat. Biotechnol.">
        <title>ORFeome cloning and global analysis of protein localization in the fission yeast Schizosaccharomyces pombe.</title>
        <authorList>
            <person name="Matsuyama A."/>
            <person name="Arai R."/>
            <person name="Yashiroda Y."/>
            <person name="Shirai A."/>
            <person name="Kamata A."/>
            <person name="Sekido S."/>
            <person name="Kobayashi Y."/>
            <person name="Hashimoto A."/>
            <person name="Hamamoto M."/>
            <person name="Hiraoka Y."/>
            <person name="Horinouchi S."/>
            <person name="Yoshida M."/>
        </authorList>
    </citation>
    <scope>SUBCELLULAR LOCATION [LARGE SCALE ANALYSIS]</scope>
</reference>
<reference key="4">
    <citation type="journal article" date="2008" name="J. Proteome Res.">
        <title>Phosphoproteome analysis of fission yeast.</title>
        <authorList>
            <person name="Wilson-Grady J.T."/>
            <person name="Villen J."/>
            <person name="Gygi S.P."/>
        </authorList>
    </citation>
    <scope>PHOSPHORYLATION [LARGE SCALE ANALYSIS] AT THR-176; SER-178; SER-230; SER-231; SER-261; SER-263; SER-265; SER-311 AND THR-312</scope>
    <scope>IDENTIFICATION BY MASS SPECTROMETRY</scope>
</reference>
<reference key="5">
    <citation type="journal article" date="2016" name="Mol. Cell">
        <title>Enhancer of Rudimentary Cooperates with Conserved RNA-Processing Factors to Promote Meiotic mRNA Decay and Facultative Heterochromatin Assembly.</title>
        <authorList>
            <person name="Sugiyama T."/>
            <person name="Thillainadesan G."/>
            <person name="Chalamcharla V.R."/>
            <person name="Meng Z."/>
            <person name="Balachandran V."/>
            <person name="Dhakshnamoorthy J."/>
            <person name="Zhou M."/>
            <person name="Grewal S.I.S."/>
        </authorList>
    </citation>
    <scope>IDENTIFICATION BY MASS SPECTROMETRY</scope>
    <scope>FUNCTION</scope>
    <scope>IDENTIFICATION IN THE ERH1-MMI1 COMPLEX</scope>
    <scope>INTERACTION WITH ERH1</scope>
    <scope>DISRUPTION PHENOTYPE</scope>
</reference>
<reference key="6">
    <citation type="journal article" date="2020" name="Sci. Rep.">
        <title>Formation of S. pombe Erh1 homodimer mediates gametogenic gene silencing and meiosis progression.</title>
        <authorList>
            <person name="Hazra D."/>
            <person name="Andric V."/>
            <person name="Palancade B."/>
            <person name="Rougemaille M."/>
            <person name="Graille M."/>
        </authorList>
    </citation>
    <scope>FUNCTION</scope>
    <scope>INTERACTION WITH ERH1</scope>
</reference>
<reference evidence="11" key="7">
    <citation type="journal article" date="2019" name="Nat. Commun.">
        <title>A conserved dimer interface connects ERH and YTH family proteins to promote gene silencing.</title>
        <authorList>
            <person name="Xie G."/>
            <person name="Vo T.V."/>
            <person name="Thillainadesan G."/>
            <person name="Holla S."/>
            <person name="Zhang B."/>
            <person name="Jiang Y."/>
            <person name="Lv M."/>
            <person name="Xu Z."/>
            <person name="Wang C."/>
            <person name="Balachandran V."/>
            <person name="Shi Y."/>
            <person name="Li F."/>
            <person name="Grewal S.I.S."/>
        </authorList>
    </citation>
    <scope>X-RAY CRYSTALLOGRAPHY (2.7 ANGSTROMS) OF 96-122 IN COMPLEX WITH ERH1</scope>
    <scope>FUNCTION</scope>
    <scope>IDENTIFICATION IN THE ERH1-MMI1 COMPLEX</scope>
    <scope>INTERACTION WITH ERH1</scope>
    <scope>DISRUPTION PHENOTYPE</scope>
    <scope>MUTAGENESIS OF TYR-97; PHE-99; TRP-112 AND ARG-119</scope>
</reference>
<organism>
    <name type="scientific">Schizosaccharomyces pombe (strain 972 / ATCC 24843)</name>
    <name type="common">Fission yeast</name>
    <dbReference type="NCBI Taxonomy" id="284812"/>
    <lineage>
        <taxon>Eukaryota</taxon>
        <taxon>Fungi</taxon>
        <taxon>Dikarya</taxon>
        <taxon>Ascomycota</taxon>
        <taxon>Taphrinomycotina</taxon>
        <taxon>Schizosaccharomycetes</taxon>
        <taxon>Schizosaccharomycetales</taxon>
        <taxon>Schizosaccharomycetaceae</taxon>
        <taxon>Schizosaccharomyces</taxon>
    </lineage>
</organism>
<evidence type="ECO:0000250" key="1">
    <source>
        <dbReference type="UniProtKB" id="Q06390"/>
    </source>
</evidence>
<evidence type="ECO:0000255" key="2">
    <source>
        <dbReference type="PROSITE-ProRule" id="PRU00225"/>
    </source>
</evidence>
<evidence type="ECO:0000256" key="3">
    <source>
        <dbReference type="SAM" id="MobiDB-lite"/>
    </source>
</evidence>
<evidence type="ECO:0000269" key="4">
    <source>
    </source>
</evidence>
<evidence type="ECO:0000269" key="5">
    <source>
    </source>
</evidence>
<evidence type="ECO:0000269" key="6">
    <source>
    </source>
</evidence>
<evidence type="ECO:0000269" key="7">
    <source>
    </source>
</evidence>
<evidence type="ECO:0000269" key="8">
    <source>
    </source>
</evidence>
<evidence type="ECO:0000269" key="9">
    <source>
    </source>
</evidence>
<evidence type="ECO:0000305" key="10"/>
<evidence type="ECO:0007744" key="11">
    <source>
        <dbReference type="PDB" id="6AKJ"/>
    </source>
</evidence>
<evidence type="ECO:0007829" key="12">
    <source>
        <dbReference type="PDB" id="6AKJ"/>
    </source>
</evidence>
<evidence type="ECO:0007829" key="13">
    <source>
        <dbReference type="PDB" id="6FPQ"/>
    </source>
</evidence>
<name>MMI1_SCHPO</name>